<reference key="1">
    <citation type="submission" date="1997-10" db="EMBL/GenBank/DDBJ databases">
        <authorList>
            <person name="Labadie J.C."/>
        </authorList>
    </citation>
    <scope>NUCLEOTIDE SEQUENCE [GENOMIC DNA]</scope>
    <source>
        <strain>2J</strain>
    </source>
</reference>
<keyword id="KW-0067">ATP-binding</keyword>
<keyword id="KW-1003">Cell membrane</keyword>
<keyword id="KW-0418">Kinase</keyword>
<keyword id="KW-0472">Membrane</keyword>
<keyword id="KW-0547">Nucleotide-binding</keyword>
<keyword id="KW-0597">Phosphoprotein</keyword>
<keyword id="KW-0808">Transferase</keyword>
<keyword id="KW-0812">Transmembrane</keyword>
<keyword id="KW-1133">Transmembrane helix</keyword>
<keyword id="KW-0902">Two-component regulatory system</keyword>
<accession>O34971</accession>
<sequence>MLVGARVLLGAPRGVGKTFTMLEEAKPLRDEGVDVVVAVVETHGRAGTAAALVGLEVVPRLTVEHRGVVLTEMDVAGVIVRRAPQLALVDELAHTNASRQRTEKRWQDVEAILDAGIDVMSTVNIQHIESLTDVVHKITGAPQRETIPDEVLRAAREIEVIDVTPVAAGALASGLVYPAERIDAALSNYFRLGNLTGLRELALLWLADEVDSALKNYRAEQGIDSTWETRERVVVALTGGPEGDSHPPGATHCRPCGRGELLAVHVTGQDGFAPPTRGLWRQRSLVESLGGSYHQVIGDDIALVEFARAANATQLVIGVSRRGRLARRCPVRGSVDGHRESGNIDVHIVNHAAAGGRFTLPRMAGGALTVKRRLSGLALTLILGPLITAVLVTFRSPDSITSDVLTYQVLVVLVALVGGIWPALLAAVLSGITLDYFLVEPLFTVTVDKPLHLFALALYITIAMMVSYVVDQAARRTRVARRSAAESELLATIAGSVLRGDGALQSLVSRTRKVWVEGCDCWMPRVRPITPTRPPGADGQTAADHAVICADGEPASDDRVVLVPVGERATLELHGADLDASERRLLAVIAAQIDAALEHEALSVTAREVGPLAETDRVRTALLSAVSHDLRRPFDGGNQKGGWLALHRDDPVCRRPGGAARDRRRKPAHLSVLVTDLLDVSRVQAGVLGVTVRQVDVEDVLPRALDELGVGPDQVVLDLDAAVGPVLADPGLLQRVLVNLLANALRFSPEGAVPTIDQSFGDTVQIRVTDHGPGIAADRRDDVFVPFQRLGDTDNSTGLGLGLALSKGFTVGMGGELDTEDTPGGGLTMVVTLPVASADADANADRPGGSRASL</sequence>
<proteinExistence type="inferred from homology"/>
<organism>
    <name type="scientific">Rathayibacter rathayi</name>
    <name type="common">Corynebacterium rathayi</name>
    <dbReference type="NCBI Taxonomy" id="33887"/>
    <lineage>
        <taxon>Bacteria</taxon>
        <taxon>Bacillati</taxon>
        <taxon>Actinomycetota</taxon>
        <taxon>Actinomycetes</taxon>
        <taxon>Micrococcales</taxon>
        <taxon>Microbacteriaceae</taxon>
        <taxon>Rathayibacter</taxon>
    </lineage>
</organism>
<comment type="function">
    <text evidence="1">Member of the two-component regulatory system KdpD/KdpE involved in the regulation of the kdp operon. KdpD may function as a membrane-associated protein kinase that phosphorylates KdpE in response to environmental signals (By similarity).</text>
</comment>
<comment type="catalytic activity">
    <reaction>
        <text>ATP + protein L-histidine = ADP + protein N-phospho-L-histidine.</text>
        <dbReference type="EC" id="2.7.13.3"/>
    </reaction>
</comment>
<comment type="subcellular location">
    <subcellularLocation>
        <location evidence="4">Cell membrane</location>
        <topology evidence="4">Multi-pass membrane protein</topology>
    </subcellularLocation>
</comment>
<feature type="chain" id="PRO_0000074774" description="Sensor protein KdpD">
    <location>
        <begin position="1"/>
        <end position="854"/>
    </location>
</feature>
<feature type="transmembrane region" description="Helical" evidence="2">
    <location>
        <begin position="35"/>
        <end position="55"/>
    </location>
</feature>
<feature type="transmembrane region" description="Helical" evidence="2">
    <location>
        <begin position="158"/>
        <end position="178"/>
    </location>
</feature>
<feature type="transmembrane region" description="Helical" evidence="2">
    <location>
        <begin position="374"/>
        <end position="394"/>
    </location>
</feature>
<feature type="transmembrane region" description="Helical" evidence="2">
    <location>
        <begin position="409"/>
        <end position="429"/>
    </location>
</feature>
<feature type="transmembrane region" description="Helical" evidence="2">
    <location>
        <begin position="450"/>
        <end position="470"/>
    </location>
</feature>
<feature type="domain" description="Histidine kinase" evidence="3">
    <location>
        <begin position="625"/>
        <end position="837"/>
    </location>
</feature>
<feature type="modified residue" description="Phosphohistidine; by autocatalysis" evidence="3">
    <location>
        <position position="628"/>
    </location>
</feature>
<name>KDPD_RATRA</name>
<dbReference type="EC" id="2.7.13.3"/>
<dbReference type="EMBL" id="AJ002069">
    <property type="protein sequence ID" value="CAA05169.1"/>
    <property type="molecule type" value="Genomic_DNA"/>
</dbReference>
<dbReference type="EMBL" id="AF030293">
    <property type="protein sequence ID" value="AAB84261.1"/>
    <property type="molecule type" value="Genomic_DNA"/>
</dbReference>
<dbReference type="SMR" id="O34971"/>
<dbReference type="GO" id="GO:0005886">
    <property type="term" value="C:plasma membrane"/>
    <property type="evidence" value="ECO:0007669"/>
    <property type="project" value="UniProtKB-SubCell"/>
</dbReference>
<dbReference type="GO" id="GO:0005524">
    <property type="term" value="F:ATP binding"/>
    <property type="evidence" value="ECO:0007669"/>
    <property type="project" value="UniProtKB-KW"/>
</dbReference>
<dbReference type="GO" id="GO:0000155">
    <property type="term" value="F:phosphorelay sensor kinase activity"/>
    <property type="evidence" value="ECO:0007669"/>
    <property type="project" value="InterPro"/>
</dbReference>
<dbReference type="CDD" id="cd00075">
    <property type="entry name" value="HATPase"/>
    <property type="match status" value="1"/>
</dbReference>
<dbReference type="Gene3D" id="1.20.120.620">
    <property type="entry name" value="Backbone structure of the membrane domain of e. Coli histidine kinase receptor kdpd"/>
    <property type="match status" value="1"/>
</dbReference>
<dbReference type="Gene3D" id="3.30.565.10">
    <property type="entry name" value="Histidine kinase-like ATPase, C-terminal domain"/>
    <property type="match status" value="1"/>
</dbReference>
<dbReference type="Gene3D" id="3.40.50.300">
    <property type="entry name" value="P-loop containing nucleotide triphosphate hydrolases"/>
    <property type="match status" value="1"/>
</dbReference>
<dbReference type="InterPro" id="IPR036890">
    <property type="entry name" value="HATPase_C_sf"/>
</dbReference>
<dbReference type="InterPro" id="IPR005467">
    <property type="entry name" value="His_kinase_dom"/>
</dbReference>
<dbReference type="InterPro" id="IPR052023">
    <property type="entry name" value="Histidine_kinase_KdpD"/>
</dbReference>
<dbReference type="InterPro" id="IPR038318">
    <property type="entry name" value="KdpD_sf"/>
</dbReference>
<dbReference type="InterPro" id="IPR025201">
    <property type="entry name" value="KdpD_TM"/>
</dbReference>
<dbReference type="InterPro" id="IPR027417">
    <property type="entry name" value="P-loop_NTPase"/>
</dbReference>
<dbReference type="InterPro" id="IPR004358">
    <property type="entry name" value="Sig_transdc_His_kin-like_C"/>
</dbReference>
<dbReference type="InterPro" id="IPR003852">
    <property type="entry name" value="Sig_transdc_His_kinase_KdpD_N"/>
</dbReference>
<dbReference type="PANTHER" id="PTHR45569">
    <property type="entry name" value="SENSOR PROTEIN KDPD"/>
    <property type="match status" value="1"/>
</dbReference>
<dbReference type="PANTHER" id="PTHR45569:SF1">
    <property type="entry name" value="SENSOR PROTEIN KDPD"/>
    <property type="match status" value="1"/>
</dbReference>
<dbReference type="Pfam" id="PF13493">
    <property type="entry name" value="DUF4118"/>
    <property type="match status" value="1"/>
</dbReference>
<dbReference type="Pfam" id="PF02518">
    <property type="entry name" value="HATPase_c"/>
    <property type="match status" value="1"/>
</dbReference>
<dbReference type="Pfam" id="PF02702">
    <property type="entry name" value="KdpD"/>
    <property type="match status" value="1"/>
</dbReference>
<dbReference type="PRINTS" id="PR00344">
    <property type="entry name" value="BCTRLSENSOR"/>
</dbReference>
<dbReference type="SMART" id="SM00387">
    <property type="entry name" value="HATPase_c"/>
    <property type="match status" value="1"/>
</dbReference>
<dbReference type="SUPFAM" id="SSF55874">
    <property type="entry name" value="ATPase domain of HSP90 chaperone/DNA topoisomerase II/histidine kinase"/>
    <property type="match status" value="1"/>
</dbReference>
<dbReference type="PROSITE" id="PS50109">
    <property type="entry name" value="HIS_KIN"/>
    <property type="match status" value="1"/>
</dbReference>
<protein>
    <recommendedName>
        <fullName>Sensor protein KdpD</fullName>
        <ecNumber>2.7.13.3</ecNumber>
    </recommendedName>
</protein>
<evidence type="ECO:0000250" key="1"/>
<evidence type="ECO:0000255" key="2"/>
<evidence type="ECO:0000255" key="3">
    <source>
        <dbReference type="PROSITE-ProRule" id="PRU00107"/>
    </source>
</evidence>
<evidence type="ECO:0000305" key="4"/>
<gene>
    <name type="primary">kdpD</name>
</gene>